<evidence type="ECO:0000255" key="1">
    <source>
        <dbReference type="HAMAP-Rule" id="MF_01200"/>
    </source>
</evidence>
<comment type="function">
    <text evidence="1">Catalyzes the decarboxylation of orotidine 5'-monophosphate (OMP) to uridine 5'-monophosphate (UMP).</text>
</comment>
<comment type="catalytic activity">
    <reaction evidence="1">
        <text>orotidine 5'-phosphate + H(+) = UMP + CO2</text>
        <dbReference type="Rhea" id="RHEA:11596"/>
        <dbReference type="ChEBI" id="CHEBI:15378"/>
        <dbReference type="ChEBI" id="CHEBI:16526"/>
        <dbReference type="ChEBI" id="CHEBI:57538"/>
        <dbReference type="ChEBI" id="CHEBI:57865"/>
        <dbReference type="EC" id="4.1.1.23"/>
    </reaction>
</comment>
<comment type="pathway">
    <text evidence="1">Pyrimidine metabolism; UMP biosynthesis via de novo pathway; UMP from orotate: step 2/2.</text>
</comment>
<comment type="subunit">
    <text evidence="1">Homodimer.</text>
</comment>
<comment type="similarity">
    <text evidence="1">Belongs to the OMP decarboxylase family. Type 1 subfamily.</text>
</comment>
<sequence length="231" mass="25081">MNDPKVVVALDFDRKQDALSFVDKIQPTDARLKVGKEMFTYFGPEFVKQLTGKGFDVFLDLKFHDIPNTVAKAVTAAADLGVWMVNVHASGGSQMMTKAKQALDNYGNDAPLLIAVTVLTSMGQEDLHGLGINKTPAEQVNFLANLTKQSGLDGVVCSAWEAEQLKADLGKEFKLITPGIRPAGSAQDDQQRIMTPKQAIDVGVDYLVIGRPITKAVDPQLVLQQINGTIR</sequence>
<protein>
    <recommendedName>
        <fullName evidence="1">Orotidine 5'-phosphate decarboxylase</fullName>
        <ecNumber evidence="1">4.1.1.23</ecNumber>
    </recommendedName>
    <alternativeName>
        <fullName evidence="1">OMP decarboxylase</fullName>
        <shortName evidence="1">OMPDCase</shortName>
        <shortName evidence="1">OMPdecase</shortName>
    </alternativeName>
</protein>
<keyword id="KW-0210">Decarboxylase</keyword>
<keyword id="KW-0456">Lyase</keyword>
<keyword id="KW-0665">Pyrimidine biosynthesis</keyword>
<organism>
    <name type="scientific">Colwellia psychrerythraea (strain 34H / ATCC BAA-681)</name>
    <name type="common">Vibrio psychroerythus</name>
    <dbReference type="NCBI Taxonomy" id="167879"/>
    <lineage>
        <taxon>Bacteria</taxon>
        <taxon>Pseudomonadati</taxon>
        <taxon>Pseudomonadota</taxon>
        <taxon>Gammaproteobacteria</taxon>
        <taxon>Alteromonadales</taxon>
        <taxon>Colwelliaceae</taxon>
        <taxon>Colwellia</taxon>
    </lineage>
</organism>
<dbReference type="EC" id="4.1.1.23" evidence="1"/>
<dbReference type="EMBL" id="CP000083">
    <property type="protein sequence ID" value="AAZ24511.1"/>
    <property type="molecule type" value="Genomic_DNA"/>
</dbReference>
<dbReference type="RefSeq" id="WP_011043153.1">
    <property type="nucleotide sequence ID" value="NC_003910.7"/>
</dbReference>
<dbReference type="SMR" id="Q482F9"/>
<dbReference type="STRING" id="167879.CPS_2339"/>
<dbReference type="KEGG" id="cps:CPS_2339"/>
<dbReference type="eggNOG" id="COG0284">
    <property type="taxonomic scope" value="Bacteria"/>
</dbReference>
<dbReference type="HOGENOM" id="CLU_067069_0_0_6"/>
<dbReference type="UniPathway" id="UPA00070">
    <property type="reaction ID" value="UER00120"/>
</dbReference>
<dbReference type="Proteomes" id="UP000000547">
    <property type="component" value="Chromosome"/>
</dbReference>
<dbReference type="GO" id="GO:0005829">
    <property type="term" value="C:cytosol"/>
    <property type="evidence" value="ECO:0007669"/>
    <property type="project" value="TreeGrafter"/>
</dbReference>
<dbReference type="GO" id="GO:0004590">
    <property type="term" value="F:orotidine-5'-phosphate decarboxylase activity"/>
    <property type="evidence" value="ECO:0007669"/>
    <property type="project" value="UniProtKB-UniRule"/>
</dbReference>
<dbReference type="GO" id="GO:0006207">
    <property type="term" value="P:'de novo' pyrimidine nucleobase biosynthetic process"/>
    <property type="evidence" value="ECO:0007669"/>
    <property type="project" value="InterPro"/>
</dbReference>
<dbReference type="GO" id="GO:0044205">
    <property type="term" value="P:'de novo' UMP biosynthetic process"/>
    <property type="evidence" value="ECO:0007669"/>
    <property type="project" value="UniProtKB-UniRule"/>
</dbReference>
<dbReference type="CDD" id="cd04725">
    <property type="entry name" value="OMP_decarboxylase_like"/>
    <property type="match status" value="1"/>
</dbReference>
<dbReference type="FunFam" id="3.20.20.70:FF:000015">
    <property type="entry name" value="Orotidine 5'-phosphate decarboxylase"/>
    <property type="match status" value="1"/>
</dbReference>
<dbReference type="Gene3D" id="3.20.20.70">
    <property type="entry name" value="Aldolase class I"/>
    <property type="match status" value="1"/>
</dbReference>
<dbReference type="HAMAP" id="MF_01200_B">
    <property type="entry name" value="OMPdecase_type1_B"/>
    <property type="match status" value="1"/>
</dbReference>
<dbReference type="InterPro" id="IPR013785">
    <property type="entry name" value="Aldolase_TIM"/>
</dbReference>
<dbReference type="InterPro" id="IPR014732">
    <property type="entry name" value="OMPdecase"/>
</dbReference>
<dbReference type="InterPro" id="IPR018089">
    <property type="entry name" value="OMPdecase_AS"/>
</dbReference>
<dbReference type="InterPro" id="IPR047596">
    <property type="entry name" value="OMPdecase_bac"/>
</dbReference>
<dbReference type="InterPro" id="IPR001754">
    <property type="entry name" value="OMPdeCOase_dom"/>
</dbReference>
<dbReference type="InterPro" id="IPR011060">
    <property type="entry name" value="RibuloseP-bd_barrel"/>
</dbReference>
<dbReference type="NCBIfam" id="NF001273">
    <property type="entry name" value="PRK00230.1"/>
    <property type="match status" value="1"/>
</dbReference>
<dbReference type="NCBIfam" id="TIGR01740">
    <property type="entry name" value="pyrF"/>
    <property type="match status" value="1"/>
</dbReference>
<dbReference type="PANTHER" id="PTHR32119">
    <property type="entry name" value="OROTIDINE 5'-PHOSPHATE DECARBOXYLASE"/>
    <property type="match status" value="1"/>
</dbReference>
<dbReference type="PANTHER" id="PTHR32119:SF2">
    <property type="entry name" value="OROTIDINE 5'-PHOSPHATE DECARBOXYLASE"/>
    <property type="match status" value="1"/>
</dbReference>
<dbReference type="Pfam" id="PF00215">
    <property type="entry name" value="OMPdecase"/>
    <property type="match status" value="1"/>
</dbReference>
<dbReference type="SMART" id="SM00934">
    <property type="entry name" value="OMPdecase"/>
    <property type="match status" value="1"/>
</dbReference>
<dbReference type="SUPFAM" id="SSF51366">
    <property type="entry name" value="Ribulose-phoshate binding barrel"/>
    <property type="match status" value="1"/>
</dbReference>
<dbReference type="PROSITE" id="PS00156">
    <property type="entry name" value="OMPDECASE"/>
    <property type="match status" value="1"/>
</dbReference>
<feature type="chain" id="PRO_0000241853" description="Orotidine 5'-phosphate decarboxylase">
    <location>
        <begin position="1"/>
        <end position="231"/>
    </location>
</feature>
<feature type="active site" description="Proton donor" evidence="1">
    <location>
        <position position="62"/>
    </location>
</feature>
<feature type="binding site" evidence="1">
    <location>
        <position position="11"/>
    </location>
    <ligand>
        <name>substrate</name>
    </ligand>
</feature>
<feature type="binding site" evidence="1">
    <location>
        <position position="33"/>
    </location>
    <ligand>
        <name>substrate</name>
    </ligand>
</feature>
<feature type="binding site" evidence="1">
    <location>
        <begin position="60"/>
        <end position="69"/>
    </location>
    <ligand>
        <name>substrate</name>
    </ligand>
</feature>
<feature type="binding site" evidence="1">
    <location>
        <position position="120"/>
    </location>
    <ligand>
        <name>substrate</name>
    </ligand>
</feature>
<feature type="binding site" evidence="1">
    <location>
        <position position="181"/>
    </location>
    <ligand>
        <name>substrate</name>
    </ligand>
</feature>
<feature type="binding site" evidence="1">
    <location>
        <position position="190"/>
    </location>
    <ligand>
        <name>substrate</name>
    </ligand>
</feature>
<feature type="binding site" evidence="1">
    <location>
        <position position="210"/>
    </location>
    <ligand>
        <name>substrate</name>
    </ligand>
</feature>
<feature type="binding site" evidence="1">
    <location>
        <position position="211"/>
    </location>
    <ligand>
        <name>substrate</name>
    </ligand>
</feature>
<accession>Q482F9</accession>
<name>PYRF_COLP3</name>
<reference key="1">
    <citation type="journal article" date="2005" name="Proc. Natl. Acad. Sci. U.S.A.">
        <title>The psychrophilic lifestyle as revealed by the genome sequence of Colwellia psychrerythraea 34H through genomic and proteomic analyses.</title>
        <authorList>
            <person name="Methe B.A."/>
            <person name="Nelson K.E."/>
            <person name="Deming J.W."/>
            <person name="Momen B."/>
            <person name="Melamud E."/>
            <person name="Zhang X."/>
            <person name="Moult J."/>
            <person name="Madupu R."/>
            <person name="Nelson W.C."/>
            <person name="Dodson R.J."/>
            <person name="Brinkac L.M."/>
            <person name="Daugherty S.C."/>
            <person name="Durkin A.S."/>
            <person name="DeBoy R.T."/>
            <person name="Kolonay J.F."/>
            <person name="Sullivan S.A."/>
            <person name="Zhou L."/>
            <person name="Davidsen T.M."/>
            <person name="Wu M."/>
            <person name="Huston A.L."/>
            <person name="Lewis M."/>
            <person name="Weaver B."/>
            <person name="Weidman J.F."/>
            <person name="Khouri H."/>
            <person name="Utterback T.R."/>
            <person name="Feldblyum T.V."/>
            <person name="Fraser C.M."/>
        </authorList>
    </citation>
    <scope>NUCLEOTIDE SEQUENCE [LARGE SCALE GENOMIC DNA]</scope>
    <source>
        <strain>34H / ATCC BAA-681</strain>
    </source>
</reference>
<gene>
    <name evidence="1" type="primary">pyrF</name>
    <name type="ordered locus">CPS_2339</name>
</gene>
<proteinExistence type="inferred from homology"/>